<dbReference type="EMBL" id="CH466522">
    <property type="protein sequence ID" value="EDL24967.1"/>
    <property type="molecule type" value="Genomic_DNA"/>
</dbReference>
<dbReference type="EMBL" id="BC138472">
    <property type="protein sequence ID" value="AAI38473.1"/>
    <property type="molecule type" value="mRNA"/>
</dbReference>
<dbReference type="EMBL" id="BC138475">
    <property type="protein sequence ID" value="AAI38476.1"/>
    <property type="molecule type" value="mRNA"/>
</dbReference>
<dbReference type="EMBL" id="AK079877">
    <property type="protein sequence ID" value="BAE43369.1"/>
    <property type="status" value="ALT_SEQ"/>
    <property type="molecule type" value="mRNA"/>
</dbReference>
<dbReference type="CCDS" id="CCDS57650.1"/>
<dbReference type="RefSeq" id="NP_001028353.1">
    <property type="nucleotide sequence ID" value="NM_001033181.1"/>
</dbReference>
<dbReference type="SMR" id="B2RRL2"/>
<dbReference type="FunCoup" id="B2RRL2">
    <property type="interactions" value="2364"/>
</dbReference>
<dbReference type="STRING" id="10090.ENSMUSP00000128798"/>
<dbReference type="iPTMnet" id="B2RRL2"/>
<dbReference type="PhosphoSitePlus" id="B2RRL2"/>
<dbReference type="jPOST" id="B2RRL2"/>
<dbReference type="PaxDb" id="10090-ENSMUSP00000128798"/>
<dbReference type="PeptideAtlas" id="B2RRL2"/>
<dbReference type="ProteomicsDB" id="301697"/>
<dbReference type="Antibodypedia" id="31694">
    <property type="antibodies" value="113 antibodies from 19 providers"/>
</dbReference>
<dbReference type="Ensembl" id="ENSMUST00000110582.4">
    <property type="protein sequence ID" value="ENSMUSP00000128798.2"/>
    <property type="gene ID" value="ENSMUSG00000079083.4"/>
</dbReference>
<dbReference type="GeneID" id="77532"/>
<dbReference type="KEGG" id="mmu:77532"/>
<dbReference type="UCSC" id="uc012hdj.1">
    <property type="organism name" value="mouse"/>
</dbReference>
<dbReference type="AGR" id="MGI:1924782"/>
<dbReference type="CTD" id="8690"/>
<dbReference type="MGI" id="MGI:1924782">
    <property type="gene designation" value="Jrkl"/>
</dbReference>
<dbReference type="VEuPathDB" id="HostDB:ENSMUSG00000079083"/>
<dbReference type="eggNOG" id="KOG3105">
    <property type="taxonomic scope" value="Eukaryota"/>
</dbReference>
<dbReference type="GeneTree" id="ENSGT00940000161513"/>
<dbReference type="HOGENOM" id="CLU_018294_1_1_1"/>
<dbReference type="InParanoid" id="B2RRL2"/>
<dbReference type="OMA" id="SRAWKQI"/>
<dbReference type="OrthoDB" id="125347at2759"/>
<dbReference type="PhylomeDB" id="B2RRL2"/>
<dbReference type="TreeFam" id="TF101131"/>
<dbReference type="BioGRID-ORCS" id="77532">
    <property type="hits" value="2 hits in 77 CRISPR screens"/>
</dbReference>
<dbReference type="PRO" id="PR:B2RRL2"/>
<dbReference type="Proteomes" id="UP000000589">
    <property type="component" value="Chromosome 9"/>
</dbReference>
<dbReference type="RNAct" id="B2RRL2">
    <property type="molecule type" value="protein"/>
</dbReference>
<dbReference type="Bgee" id="ENSMUSG00000079083">
    <property type="expression patterns" value="Expressed in granulocyte and 61 other cell types or tissues"/>
</dbReference>
<dbReference type="GO" id="GO:0005634">
    <property type="term" value="C:nucleus"/>
    <property type="evidence" value="ECO:0007669"/>
    <property type="project" value="UniProtKB-SubCell"/>
</dbReference>
<dbReference type="GO" id="GO:0003677">
    <property type="term" value="F:DNA binding"/>
    <property type="evidence" value="ECO:0007669"/>
    <property type="project" value="UniProtKB-KW"/>
</dbReference>
<dbReference type="Gene3D" id="1.10.10.60">
    <property type="entry name" value="Homeodomain-like"/>
    <property type="match status" value="2"/>
</dbReference>
<dbReference type="Gene3D" id="3.30.420.10">
    <property type="entry name" value="Ribonuclease H-like superfamily/Ribonuclease H"/>
    <property type="match status" value="1"/>
</dbReference>
<dbReference type="InterPro" id="IPR050863">
    <property type="entry name" value="CenT-Element_Derived"/>
</dbReference>
<dbReference type="InterPro" id="IPR004875">
    <property type="entry name" value="DDE_SF_endonuclease_dom"/>
</dbReference>
<dbReference type="InterPro" id="IPR009057">
    <property type="entry name" value="Homeodomain-like_sf"/>
</dbReference>
<dbReference type="InterPro" id="IPR006600">
    <property type="entry name" value="HTH_CenpB_DNA-bd_dom"/>
</dbReference>
<dbReference type="InterPro" id="IPR007889">
    <property type="entry name" value="HTH_Psq"/>
</dbReference>
<dbReference type="InterPro" id="IPR036397">
    <property type="entry name" value="RNaseH_sf"/>
</dbReference>
<dbReference type="PANTHER" id="PTHR19303:SF16">
    <property type="entry name" value="JERKY PROTEIN HOMOLOG-LIKE"/>
    <property type="match status" value="1"/>
</dbReference>
<dbReference type="PANTHER" id="PTHR19303">
    <property type="entry name" value="TRANSPOSON"/>
    <property type="match status" value="1"/>
</dbReference>
<dbReference type="Pfam" id="PF04218">
    <property type="entry name" value="CENP-B_N"/>
    <property type="match status" value="1"/>
</dbReference>
<dbReference type="Pfam" id="PF03184">
    <property type="entry name" value="DDE_1"/>
    <property type="match status" value="1"/>
</dbReference>
<dbReference type="Pfam" id="PF03221">
    <property type="entry name" value="HTH_Tnp_Tc5"/>
    <property type="match status" value="1"/>
</dbReference>
<dbReference type="SMART" id="SM00674">
    <property type="entry name" value="CENPB"/>
    <property type="match status" value="1"/>
</dbReference>
<dbReference type="SUPFAM" id="SSF46689">
    <property type="entry name" value="Homeodomain-like"/>
    <property type="match status" value="2"/>
</dbReference>
<dbReference type="PROSITE" id="PS51253">
    <property type="entry name" value="HTH_CENPB"/>
    <property type="match status" value="1"/>
</dbReference>
<dbReference type="PROSITE" id="PS50960">
    <property type="entry name" value="HTH_PSQ"/>
    <property type="match status" value="1"/>
</dbReference>
<comment type="subcellular location">
    <subcellularLocation>
        <location evidence="3 4">Nucleus</location>
    </subcellularLocation>
</comment>
<comment type="similarity">
    <text evidence="5">Belongs to the tigger transposable element derived protein family.</text>
</comment>
<comment type="sequence caution" evidence="5">
    <conflict type="erroneous initiation">
        <sequence resource="EMBL-CDS" id="BAE43369"/>
    </conflict>
    <text>Truncated N-terminus.</text>
</comment>
<comment type="sequence caution" evidence="5">
    <conflict type="frameshift">
        <sequence resource="EMBL-CDS" id="BAE43369"/>
    </conflict>
</comment>
<feature type="chain" id="PRO_0000379975" description="Jerky protein homolog-like">
    <location>
        <begin position="1"/>
        <end position="523"/>
    </location>
</feature>
<feature type="domain" description="HTH psq-type" evidence="3">
    <location>
        <begin position="1"/>
        <end position="52"/>
    </location>
</feature>
<feature type="domain" description="HTH CENPB-type" evidence="4">
    <location>
        <begin position="67"/>
        <end position="139"/>
    </location>
</feature>
<feature type="domain" description="DDE-1" evidence="2">
    <location>
        <begin position="168"/>
        <end position="385"/>
    </location>
</feature>
<feature type="DNA-binding region" description="H-T-H motif" evidence="1">
    <location>
        <begin position="28"/>
        <end position="48"/>
    </location>
</feature>
<feature type="DNA-binding region" description="H-T-H motif" evidence="1">
    <location>
        <begin position="100"/>
        <end position="132"/>
    </location>
</feature>
<feature type="sequence conflict" description="In Ref. 3; BAE43369." evidence="5" ref="3">
    <original>R</original>
    <variation>T</variation>
    <location>
        <position position="506"/>
    </location>
</feature>
<feature type="sequence conflict" description="In Ref. 3; BAE43369." evidence="5" ref="3">
    <original>K</original>
    <variation>R</variation>
    <location>
        <position position="515"/>
    </location>
</feature>
<feature type="sequence conflict" description="In Ref. 3; BAE43369." evidence="5" ref="3">
    <original>N</original>
    <variation>T</variation>
    <location>
        <position position="520"/>
    </location>
</feature>
<accession>B2RRL2</accession>
<accession>Q3V2Y6</accession>
<organism>
    <name type="scientific">Mus musculus</name>
    <name type="common">Mouse</name>
    <dbReference type="NCBI Taxonomy" id="10090"/>
    <lineage>
        <taxon>Eukaryota</taxon>
        <taxon>Metazoa</taxon>
        <taxon>Chordata</taxon>
        <taxon>Craniata</taxon>
        <taxon>Vertebrata</taxon>
        <taxon>Euteleostomi</taxon>
        <taxon>Mammalia</taxon>
        <taxon>Eutheria</taxon>
        <taxon>Euarchontoglires</taxon>
        <taxon>Glires</taxon>
        <taxon>Rodentia</taxon>
        <taxon>Myomorpha</taxon>
        <taxon>Muroidea</taxon>
        <taxon>Muridae</taxon>
        <taxon>Murinae</taxon>
        <taxon>Mus</taxon>
        <taxon>Mus</taxon>
    </lineage>
</organism>
<protein>
    <recommendedName>
        <fullName>Jerky protein homolog-like</fullName>
    </recommendedName>
</protein>
<sequence>MSGKRKRVVLTIKDKLDIIKKLEDGGSSKQLAVIYGIGETTVRDIRKNKEKIITYASSSDSTSLLAKRKSMKPSMYEELDKAMLEWFNQQRAKGNPISGPICAKRAEFFFYALGMDGDFNPSAGWLTRFKQRHSIREINIRNERLNGDETAVEDFCNNFRDFIEQENLQPEQIYNADETGLFWKCLPSRTTVIKGKCTVPGHNLGEERITVMCCTNATGLHKLKLCVVGKARKPRSFKSTDTLNLPVSYFSQKGAWMDLSIFRQWFDKIFVPQVREYLRSKGLQEKAVLLLDNSPTHPNENVLRSDDGQIFAKYLPPNVASLIQPLGQGVIAAMKRNYRAGLLHNNLEEGNDLKSFWKKLTLLDALYEIAMAWNLVKPVTISRAWKQILPAIEEKEGLDFDEDISGATVATILQHTKGLENVTPENLEKWLEIDSTEPGYEVLTDSEIIRRAQGQTDESSENDEERIELIPEKHINHTTALQWTENLLDYLEQQGDMILPDRLVIRKLRATIRNKQKMTNPGQ</sequence>
<reference key="1">
    <citation type="submission" date="2005-07" db="EMBL/GenBank/DDBJ databases">
        <authorList>
            <person name="Mural R.J."/>
            <person name="Adams M.D."/>
            <person name="Myers E.W."/>
            <person name="Smith H.O."/>
            <person name="Venter J.C."/>
        </authorList>
    </citation>
    <scope>NUCLEOTIDE SEQUENCE [LARGE SCALE GENOMIC DNA]</scope>
</reference>
<reference key="2">
    <citation type="journal article" date="2004" name="Genome Res.">
        <title>The status, quality, and expansion of the NIH full-length cDNA project: the Mammalian Gene Collection (MGC).</title>
        <authorList>
            <consortium name="The MGC Project Team"/>
        </authorList>
    </citation>
    <scope>NUCLEOTIDE SEQUENCE [LARGE SCALE MRNA]</scope>
    <source>
        <tissue>Brain</tissue>
    </source>
</reference>
<reference key="3">
    <citation type="journal article" date="2005" name="Science">
        <title>The transcriptional landscape of the mammalian genome.</title>
        <authorList>
            <person name="Carninci P."/>
            <person name="Kasukawa T."/>
            <person name="Katayama S."/>
            <person name="Gough J."/>
            <person name="Frith M.C."/>
            <person name="Maeda N."/>
            <person name="Oyama R."/>
            <person name="Ravasi T."/>
            <person name="Lenhard B."/>
            <person name="Wells C."/>
            <person name="Kodzius R."/>
            <person name="Shimokawa K."/>
            <person name="Bajic V.B."/>
            <person name="Brenner S.E."/>
            <person name="Batalov S."/>
            <person name="Forrest A.R."/>
            <person name="Zavolan M."/>
            <person name="Davis M.J."/>
            <person name="Wilming L.G."/>
            <person name="Aidinis V."/>
            <person name="Allen J.E."/>
            <person name="Ambesi-Impiombato A."/>
            <person name="Apweiler R."/>
            <person name="Aturaliya R.N."/>
            <person name="Bailey T.L."/>
            <person name="Bansal M."/>
            <person name="Baxter L."/>
            <person name="Beisel K.W."/>
            <person name="Bersano T."/>
            <person name="Bono H."/>
            <person name="Chalk A.M."/>
            <person name="Chiu K.P."/>
            <person name="Choudhary V."/>
            <person name="Christoffels A."/>
            <person name="Clutterbuck D.R."/>
            <person name="Crowe M.L."/>
            <person name="Dalla E."/>
            <person name="Dalrymple B.P."/>
            <person name="de Bono B."/>
            <person name="Della Gatta G."/>
            <person name="di Bernardo D."/>
            <person name="Down T."/>
            <person name="Engstrom P."/>
            <person name="Fagiolini M."/>
            <person name="Faulkner G."/>
            <person name="Fletcher C.F."/>
            <person name="Fukushima T."/>
            <person name="Furuno M."/>
            <person name="Futaki S."/>
            <person name="Gariboldi M."/>
            <person name="Georgii-Hemming P."/>
            <person name="Gingeras T.R."/>
            <person name="Gojobori T."/>
            <person name="Green R.E."/>
            <person name="Gustincich S."/>
            <person name="Harbers M."/>
            <person name="Hayashi Y."/>
            <person name="Hensch T.K."/>
            <person name="Hirokawa N."/>
            <person name="Hill D."/>
            <person name="Huminiecki L."/>
            <person name="Iacono M."/>
            <person name="Ikeo K."/>
            <person name="Iwama A."/>
            <person name="Ishikawa T."/>
            <person name="Jakt M."/>
            <person name="Kanapin A."/>
            <person name="Katoh M."/>
            <person name="Kawasawa Y."/>
            <person name="Kelso J."/>
            <person name="Kitamura H."/>
            <person name="Kitano H."/>
            <person name="Kollias G."/>
            <person name="Krishnan S.P."/>
            <person name="Kruger A."/>
            <person name="Kummerfeld S.K."/>
            <person name="Kurochkin I.V."/>
            <person name="Lareau L.F."/>
            <person name="Lazarevic D."/>
            <person name="Lipovich L."/>
            <person name="Liu J."/>
            <person name="Liuni S."/>
            <person name="McWilliam S."/>
            <person name="Madan Babu M."/>
            <person name="Madera M."/>
            <person name="Marchionni L."/>
            <person name="Matsuda H."/>
            <person name="Matsuzawa S."/>
            <person name="Miki H."/>
            <person name="Mignone F."/>
            <person name="Miyake S."/>
            <person name="Morris K."/>
            <person name="Mottagui-Tabar S."/>
            <person name="Mulder N."/>
            <person name="Nakano N."/>
            <person name="Nakauchi H."/>
            <person name="Ng P."/>
            <person name="Nilsson R."/>
            <person name="Nishiguchi S."/>
            <person name="Nishikawa S."/>
            <person name="Nori F."/>
            <person name="Ohara O."/>
            <person name="Okazaki Y."/>
            <person name="Orlando V."/>
            <person name="Pang K.C."/>
            <person name="Pavan W.J."/>
            <person name="Pavesi G."/>
            <person name="Pesole G."/>
            <person name="Petrovsky N."/>
            <person name="Piazza S."/>
            <person name="Reed J."/>
            <person name="Reid J.F."/>
            <person name="Ring B.Z."/>
            <person name="Ringwald M."/>
            <person name="Rost B."/>
            <person name="Ruan Y."/>
            <person name="Salzberg S.L."/>
            <person name="Sandelin A."/>
            <person name="Schneider C."/>
            <person name="Schoenbach C."/>
            <person name="Sekiguchi K."/>
            <person name="Semple C.A."/>
            <person name="Seno S."/>
            <person name="Sessa L."/>
            <person name="Sheng Y."/>
            <person name="Shibata Y."/>
            <person name="Shimada H."/>
            <person name="Shimada K."/>
            <person name="Silva D."/>
            <person name="Sinclair B."/>
            <person name="Sperling S."/>
            <person name="Stupka E."/>
            <person name="Sugiura K."/>
            <person name="Sultana R."/>
            <person name="Takenaka Y."/>
            <person name="Taki K."/>
            <person name="Tammoja K."/>
            <person name="Tan S.L."/>
            <person name="Tang S."/>
            <person name="Taylor M.S."/>
            <person name="Tegner J."/>
            <person name="Teichmann S.A."/>
            <person name="Ueda H.R."/>
            <person name="van Nimwegen E."/>
            <person name="Verardo R."/>
            <person name="Wei C.L."/>
            <person name="Yagi K."/>
            <person name="Yamanishi H."/>
            <person name="Zabarovsky E."/>
            <person name="Zhu S."/>
            <person name="Zimmer A."/>
            <person name="Hide W."/>
            <person name="Bult C."/>
            <person name="Grimmond S.M."/>
            <person name="Teasdale R.D."/>
            <person name="Liu E.T."/>
            <person name="Brusic V."/>
            <person name="Quackenbush J."/>
            <person name="Wahlestedt C."/>
            <person name="Mattick J.S."/>
            <person name="Hume D.A."/>
            <person name="Kai C."/>
            <person name="Sasaki D."/>
            <person name="Tomaru Y."/>
            <person name="Fukuda S."/>
            <person name="Kanamori-Katayama M."/>
            <person name="Suzuki M."/>
            <person name="Aoki J."/>
            <person name="Arakawa T."/>
            <person name="Iida J."/>
            <person name="Imamura K."/>
            <person name="Itoh M."/>
            <person name="Kato T."/>
            <person name="Kawaji H."/>
            <person name="Kawagashira N."/>
            <person name="Kawashima T."/>
            <person name="Kojima M."/>
            <person name="Kondo S."/>
            <person name="Konno H."/>
            <person name="Nakano K."/>
            <person name="Ninomiya N."/>
            <person name="Nishio T."/>
            <person name="Okada M."/>
            <person name="Plessy C."/>
            <person name="Shibata K."/>
            <person name="Shiraki T."/>
            <person name="Suzuki S."/>
            <person name="Tagami M."/>
            <person name="Waki K."/>
            <person name="Watahiki A."/>
            <person name="Okamura-Oho Y."/>
            <person name="Suzuki H."/>
            <person name="Kawai J."/>
            <person name="Hayashizaki Y."/>
        </authorList>
    </citation>
    <scope>NUCLEOTIDE SEQUENCE [LARGE SCALE MRNA] OF 264-523</scope>
    <source>
        <strain>C57BL/6J</strain>
        <tissue>Thymus</tissue>
    </source>
</reference>
<gene>
    <name type="primary">Jrkl</name>
</gene>
<proteinExistence type="evidence at transcript level"/>
<name>JERKL_MOUSE</name>
<evidence type="ECO:0000250" key="1"/>
<evidence type="ECO:0000255" key="2"/>
<evidence type="ECO:0000255" key="3">
    <source>
        <dbReference type="PROSITE-ProRule" id="PRU00320"/>
    </source>
</evidence>
<evidence type="ECO:0000255" key="4">
    <source>
        <dbReference type="PROSITE-ProRule" id="PRU00583"/>
    </source>
</evidence>
<evidence type="ECO:0000305" key="5"/>
<keyword id="KW-0238">DNA-binding</keyword>
<keyword id="KW-0539">Nucleus</keyword>
<keyword id="KW-1185">Reference proteome</keyword>